<accession>Q15UC8</accession>
<protein>
    <recommendedName>
        <fullName evidence="1">RNA chaperone ProQ</fullName>
    </recommendedName>
</protein>
<keyword id="KW-0143">Chaperone</keyword>
<keyword id="KW-0963">Cytoplasm</keyword>
<keyword id="KW-0694">RNA-binding</keyword>
<reference key="1">
    <citation type="submission" date="2006-06" db="EMBL/GenBank/DDBJ databases">
        <title>Complete sequence of Pseudoalteromonas atlantica T6c.</title>
        <authorList>
            <consortium name="US DOE Joint Genome Institute"/>
            <person name="Copeland A."/>
            <person name="Lucas S."/>
            <person name="Lapidus A."/>
            <person name="Barry K."/>
            <person name="Detter J.C."/>
            <person name="Glavina del Rio T."/>
            <person name="Hammon N."/>
            <person name="Israni S."/>
            <person name="Dalin E."/>
            <person name="Tice H."/>
            <person name="Pitluck S."/>
            <person name="Saunders E."/>
            <person name="Brettin T."/>
            <person name="Bruce D."/>
            <person name="Han C."/>
            <person name="Tapia R."/>
            <person name="Gilna P."/>
            <person name="Schmutz J."/>
            <person name="Larimer F."/>
            <person name="Land M."/>
            <person name="Hauser L."/>
            <person name="Kyrpides N."/>
            <person name="Kim E."/>
            <person name="Karls A.C."/>
            <person name="Bartlett D."/>
            <person name="Higgins B.P."/>
            <person name="Richardson P."/>
        </authorList>
    </citation>
    <scope>NUCLEOTIDE SEQUENCE [LARGE SCALE GENOMIC DNA]</scope>
    <source>
        <strain>T6c / ATCC BAA-1087</strain>
    </source>
</reference>
<feature type="chain" id="PRO_0000303093" description="RNA chaperone ProQ">
    <location>
        <begin position="1"/>
        <end position="216"/>
    </location>
</feature>
<feature type="region of interest" description="Disordered" evidence="2">
    <location>
        <begin position="105"/>
        <end position="159"/>
    </location>
</feature>
<feature type="compositionally biased region" description="Basic and acidic residues" evidence="2">
    <location>
        <begin position="105"/>
        <end position="115"/>
    </location>
</feature>
<evidence type="ECO:0000255" key="1">
    <source>
        <dbReference type="HAMAP-Rule" id="MF_00749"/>
    </source>
</evidence>
<evidence type="ECO:0000256" key="2">
    <source>
        <dbReference type="SAM" id="MobiDB-lite"/>
    </source>
</evidence>
<comment type="function">
    <text evidence="1">RNA chaperone with significant RNA binding, RNA strand exchange and RNA duplexing activities.</text>
</comment>
<comment type="subcellular location">
    <subcellularLocation>
        <location evidence="1">Cytoplasm</location>
    </subcellularLocation>
</comment>
<comment type="similarity">
    <text evidence="1">Belongs to the ProQ family.</text>
</comment>
<sequence length="216" mass="23796">MDNPQKFSNSKEVINFLSESFPACFSVTGDAKPLKIGIFQDLAQRLEEEERVSKTLLRSSLRHYTNSWRYLHSVKEGAFRVDLDGQQAAPIEKEHADHAQAQLEESKAKVAEKRKAQNAAKPGAKKSYKSKTVPAFKSSPKGTNQDNVKPKAKLPPPEKLSAEQLVAGTSVTVKIGKSPMPATITDVSKDGVQVQLDTGMVVKVQVDNLRLARSKR</sequence>
<organism>
    <name type="scientific">Pseudoalteromonas atlantica (strain T6c / ATCC BAA-1087)</name>
    <dbReference type="NCBI Taxonomy" id="3042615"/>
    <lineage>
        <taxon>Bacteria</taxon>
        <taxon>Pseudomonadati</taxon>
        <taxon>Pseudomonadota</taxon>
        <taxon>Gammaproteobacteria</taxon>
        <taxon>Alteromonadales</taxon>
        <taxon>Alteromonadaceae</taxon>
        <taxon>Paraglaciecola</taxon>
    </lineage>
</organism>
<name>PROQ_PSEA6</name>
<gene>
    <name evidence="1" type="primary">proQ</name>
    <name type="ordered locus">Patl_1992</name>
</gene>
<dbReference type="EMBL" id="CP000388">
    <property type="protein sequence ID" value="ABG40510.1"/>
    <property type="molecule type" value="Genomic_DNA"/>
</dbReference>
<dbReference type="RefSeq" id="WP_011574804.1">
    <property type="nucleotide sequence ID" value="NC_008228.1"/>
</dbReference>
<dbReference type="SMR" id="Q15UC8"/>
<dbReference type="STRING" id="342610.Patl_1992"/>
<dbReference type="KEGG" id="pat:Patl_1992"/>
<dbReference type="eggNOG" id="COG3109">
    <property type="taxonomic scope" value="Bacteria"/>
</dbReference>
<dbReference type="HOGENOM" id="CLU_113254_0_0_6"/>
<dbReference type="OrthoDB" id="8421419at2"/>
<dbReference type="Proteomes" id="UP000001981">
    <property type="component" value="Chromosome"/>
</dbReference>
<dbReference type="GO" id="GO:0005829">
    <property type="term" value="C:cytosol"/>
    <property type="evidence" value="ECO:0007669"/>
    <property type="project" value="TreeGrafter"/>
</dbReference>
<dbReference type="GO" id="GO:0033592">
    <property type="term" value="F:RNA strand annealing activity"/>
    <property type="evidence" value="ECO:0007669"/>
    <property type="project" value="UniProtKB-UniRule"/>
</dbReference>
<dbReference type="GO" id="GO:0034057">
    <property type="term" value="F:RNA strand-exchange activity"/>
    <property type="evidence" value="ECO:0007669"/>
    <property type="project" value="UniProtKB-UniRule"/>
</dbReference>
<dbReference type="GO" id="GO:0010608">
    <property type="term" value="P:post-transcriptional regulation of gene expression"/>
    <property type="evidence" value="ECO:0007669"/>
    <property type="project" value="InterPro"/>
</dbReference>
<dbReference type="Gene3D" id="1.10.1710.10">
    <property type="entry name" value="ProQ/FinO domain"/>
    <property type="match status" value="1"/>
</dbReference>
<dbReference type="HAMAP" id="MF_00749">
    <property type="entry name" value="ProQ"/>
    <property type="match status" value="1"/>
</dbReference>
<dbReference type="InterPro" id="IPR023529">
    <property type="entry name" value="ProQ"/>
</dbReference>
<dbReference type="InterPro" id="IPR016103">
    <property type="entry name" value="ProQ/FinO"/>
</dbReference>
<dbReference type="InterPro" id="IPR036442">
    <property type="entry name" value="ProQ/FinO_sf"/>
</dbReference>
<dbReference type="InterPro" id="IPR035236">
    <property type="entry name" value="ProQ_C"/>
</dbReference>
<dbReference type="NCBIfam" id="NF003434">
    <property type="entry name" value="PRK04950.1"/>
    <property type="match status" value="1"/>
</dbReference>
<dbReference type="PANTHER" id="PTHR38106">
    <property type="entry name" value="RNA CHAPERONE PROQ"/>
    <property type="match status" value="1"/>
</dbReference>
<dbReference type="PANTHER" id="PTHR38106:SF1">
    <property type="entry name" value="RNA CHAPERONE PROQ"/>
    <property type="match status" value="1"/>
</dbReference>
<dbReference type="Pfam" id="PF04352">
    <property type="entry name" value="ProQ"/>
    <property type="match status" value="1"/>
</dbReference>
<dbReference type="Pfam" id="PF17516">
    <property type="entry name" value="ProQ_C"/>
    <property type="match status" value="1"/>
</dbReference>
<dbReference type="SMART" id="SM00945">
    <property type="entry name" value="ProQ"/>
    <property type="match status" value="1"/>
</dbReference>
<dbReference type="SUPFAM" id="SSF48657">
    <property type="entry name" value="FinO-like"/>
    <property type="match status" value="1"/>
</dbReference>
<proteinExistence type="inferred from homology"/>